<feature type="chain" id="PRO_1000149879" description="Universal stress protein B">
    <location>
        <begin position="1"/>
        <end position="111"/>
    </location>
</feature>
<feature type="transmembrane region" description="Helical" evidence="1">
    <location>
        <begin position="1"/>
        <end position="21"/>
    </location>
</feature>
<feature type="transmembrane region" description="Helical" evidence="1">
    <location>
        <begin position="90"/>
        <end position="110"/>
    </location>
</feature>
<accession>C0Q145</accession>
<evidence type="ECO:0000255" key="1">
    <source>
        <dbReference type="HAMAP-Rule" id="MF_01088"/>
    </source>
</evidence>
<dbReference type="EMBL" id="CP000857">
    <property type="protein sequence ID" value="ACN47741.1"/>
    <property type="molecule type" value="Genomic_DNA"/>
</dbReference>
<dbReference type="RefSeq" id="WP_000626193.1">
    <property type="nucleotide sequence ID" value="NC_012125.1"/>
</dbReference>
<dbReference type="GeneID" id="66757914"/>
<dbReference type="KEGG" id="sei:SPC_3660"/>
<dbReference type="HOGENOM" id="CLU_151816_0_0_6"/>
<dbReference type="Proteomes" id="UP000001599">
    <property type="component" value="Chromosome"/>
</dbReference>
<dbReference type="GO" id="GO:0005886">
    <property type="term" value="C:plasma membrane"/>
    <property type="evidence" value="ECO:0007669"/>
    <property type="project" value="UniProtKB-SubCell"/>
</dbReference>
<dbReference type="HAMAP" id="MF_01088">
    <property type="entry name" value="UspB"/>
    <property type="match status" value="1"/>
</dbReference>
<dbReference type="InterPro" id="IPR019598">
    <property type="entry name" value="Universal_stress_protein_B"/>
</dbReference>
<dbReference type="NCBIfam" id="NF003435">
    <property type="entry name" value="PRK04960.1"/>
    <property type="match status" value="1"/>
</dbReference>
<dbReference type="Pfam" id="PF10625">
    <property type="entry name" value="UspB"/>
    <property type="match status" value="1"/>
</dbReference>
<gene>
    <name evidence="1" type="primary">uspB</name>
    <name type="ordered locus">SPC_3660</name>
</gene>
<comment type="subcellular location">
    <subcellularLocation>
        <location evidence="1">Cell inner membrane</location>
        <topology evidence="1">Multi-pass membrane protein</topology>
    </subcellularLocation>
</comment>
<comment type="similarity">
    <text evidence="1">Belongs to the universal stress protein B family.</text>
</comment>
<protein>
    <recommendedName>
        <fullName evidence="1">Universal stress protein B</fullName>
    </recommendedName>
</protein>
<sequence length="111" mass="13014">MISTVSLFWALCVVCIVNMARYFSSLRALLVVLRGCDPLLYQYVDGGGFFTTHGQPNKQVRLVWYIYAQRYRDHHDEEFIRRCERVRRQFLLTSALCGLVVVSLIALMIWH</sequence>
<keyword id="KW-0997">Cell inner membrane</keyword>
<keyword id="KW-1003">Cell membrane</keyword>
<keyword id="KW-0472">Membrane</keyword>
<keyword id="KW-0812">Transmembrane</keyword>
<keyword id="KW-1133">Transmembrane helix</keyword>
<reference key="1">
    <citation type="journal article" date="2009" name="PLoS ONE">
        <title>Salmonella paratyphi C: genetic divergence from Salmonella choleraesuis and pathogenic convergence with Salmonella typhi.</title>
        <authorList>
            <person name="Liu W.-Q."/>
            <person name="Feng Y."/>
            <person name="Wang Y."/>
            <person name="Zou Q.-H."/>
            <person name="Chen F."/>
            <person name="Guo J.-T."/>
            <person name="Peng Y.-H."/>
            <person name="Jin Y."/>
            <person name="Li Y.-G."/>
            <person name="Hu S.-N."/>
            <person name="Johnston R.N."/>
            <person name="Liu G.-R."/>
            <person name="Liu S.-L."/>
        </authorList>
    </citation>
    <scope>NUCLEOTIDE SEQUENCE [LARGE SCALE GENOMIC DNA]</scope>
    <source>
        <strain>RKS4594</strain>
    </source>
</reference>
<proteinExistence type="inferred from homology"/>
<name>USPB_SALPC</name>
<organism>
    <name type="scientific">Salmonella paratyphi C (strain RKS4594)</name>
    <dbReference type="NCBI Taxonomy" id="476213"/>
    <lineage>
        <taxon>Bacteria</taxon>
        <taxon>Pseudomonadati</taxon>
        <taxon>Pseudomonadota</taxon>
        <taxon>Gammaproteobacteria</taxon>
        <taxon>Enterobacterales</taxon>
        <taxon>Enterobacteriaceae</taxon>
        <taxon>Salmonella</taxon>
    </lineage>
</organism>